<comment type="subcellular location">
    <subcellularLocation>
        <location evidence="1">Mitochondrion</location>
    </subcellularLocation>
</comment>
<comment type="similarity">
    <text evidence="2">Belongs to the RRG7 family.</text>
</comment>
<organism>
    <name type="scientific">Eremothecium gossypii (strain ATCC 10895 / CBS 109.51 / FGSC 9923 / NRRL Y-1056)</name>
    <name type="common">Yeast</name>
    <name type="synonym">Ashbya gossypii</name>
    <dbReference type="NCBI Taxonomy" id="284811"/>
    <lineage>
        <taxon>Eukaryota</taxon>
        <taxon>Fungi</taxon>
        <taxon>Dikarya</taxon>
        <taxon>Ascomycota</taxon>
        <taxon>Saccharomycotina</taxon>
        <taxon>Saccharomycetes</taxon>
        <taxon>Saccharomycetales</taxon>
        <taxon>Saccharomycetaceae</taxon>
        <taxon>Eremothecium</taxon>
    </lineage>
</organism>
<proteinExistence type="inferred from homology"/>
<accession>Q752N3</accession>
<keyword id="KW-0496">Mitochondrion</keyword>
<keyword id="KW-1185">Reference proteome</keyword>
<feature type="chain" id="PRO_0000405454" description="Required for respiratory growth protein 7, mitochondrial">
    <location>
        <begin position="1"/>
        <end position="240"/>
    </location>
</feature>
<protein>
    <recommendedName>
        <fullName>Required for respiratory growth protein 7, mitochondrial</fullName>
    </recommendedName>
</protein>
<reference key="1">
    <citation type="journal article" date="2004" name="Science">
        <title>The Ashbya gossypii genome as a tool for mapping the ancient Saccharomyces cerevisiae genome.</title>
        <authorList>
            <person name="Dietrich F.S."/>
            <person name="Voegeli S."/>
            <person name="Brachat S."/>
            <person name="Lerch A."/>
            <person name="Gates K."/>
            <person name="Steiner S."/>
            <person name="Mohr C."/>
            <person name="Poehlmann R."/>
            <person name="Luedi P."/>
            <person name="Choi S."/>
            <person name="Wing R.A."/>
            <person name="Flavier A."/>
            <person name="Gaffney T.D."/>
            <person name="Philippsen P."/>
        </authorList>
    </citation>
    <scope>NUCLEOTIDE SEQUENCE [LARGE SCALE GENOMIC DNA]</scope>
    <source>
        <strain>ATCC 10895 / CBS 109.51 / FGSC 9923 / NRRL Y-1056</strain>
    </source>
</reference>
<reference key="2">
    <citation type="journal article" date="2013" name="G3 (Bethesda)">
        <title>Genomes of Ashbya fungi isolated from insects reveal four mating-type loci, numerous translocations, lack of transposons, and distinct gene duplications.</title>
        <authorList>
            <person name="Dietrich F.S."/>
            <person name="Voegeli S."/>
            <person name="Kuo S."/>
            <person name="Philippsen P."/>
        </authorList>
    </citation>
    <scope>GENOME REANNOTATION</scope>
    <source>
        <strain>ATCC 10895 / CBS 109.51 / FGSC 9923 / NRRL Y-1056</strain>
    </source>
</reference>
<dbReference type="EMBL" id="AE016819">
    <property type="protein sequence ID" value="AAS53912.1"/>
    <property type="molecule type" value="Genomic_DNA"/>
</dbReference>
<dbReference type="RefSeq" id="NP_986088.1">
    <property type="nucleotide sequence ID" value="NM_212224.1"/>
</dbReference>
<dbReference type="FunCoup" id="Q752N3">
    <property type="interactions" value="56"/>
</dbReference>
<dbReference type="EnsemblFungi" id="AAS53912">
    <property type="protein sequence ID" value="AAS53912"/>
    <property type="gene ID" value="AGOS_AFR541W"/>
</dbReference>
<dbReference type="GeneID" id="4622367"/>
<dbReference type="KEGG" id="ago:AGOS_AFR541W"/>
<dbReference type="eggNOG" id="ENOG502RZ1Q">
    <property type="taxonomic scope" value="Eukaryota"/>
</dbReference>
<dbReference type="HOGENOM" id="CLU_085105_1_0_1"/>
<dbReference type="InParanoid" id="Q752N3"/>
<dbReference type="OMA" id="YYENEYA"/>
<dbReference type="OrthoDB" id="20734at2759"/>
<dbReference type="Proteomes" id="UP000000591">
    <property type="component" value="Chromosome VI"/>
</dbReference>
<dbReference type="GO" id="GO:0005739">
    <property type="term" value="C:mitochondrion"/>
    <property type="evidence" value="ECO:0007669"/>
    <property type="project" value="UniProtKB-SubCell"/>
</dbReference>
<dbReference type="InterPro" id="IPR018828">
    <property type="entry name" value="RRG7"/>
</dbReference>
<dbReference type="PANTHER" id="PTHR28133">
    <property type="entry name" value="REQUIRED FOR RESPIRATORY GROWTH PROTEIN 7, MITOCHONDRIAL"/>
    <property type="match status" value="1"/>
</dbReference>
<dbReference type="PANTHER" id="PTHR28133:SF1">
    <property type="entry name" value="REQUIRED FOR RESPIRATORY GROWTH PROTEIN 7, MITOCHONDRIAL"/>
    <property type="match status" value="1"/>
</dbReference>
<dbReference type="Pfam" id="PF10356">
    <property type="entry name" value="RRG7"/>
    <property type="match status" value="1"/>
</dbReference>
<sequence>MPTGLQPAMLKTTGTRLAAAGAYDLVLQDYVRKNAAILDSTVFRGTLYELTVMRELHARLGVSRLRQRGAAYDGGIDITGKWDLADVPGVAPDPHEAAIPRSVRCGASRLKPLRRKILDGTARPLDVLVQCKALTTARVGGRLFRELFGAFGAFGARSKVHRNNTVLMLSSPNLLTRNGIAVMNQLELPIIYLRIGLPRIAADGSLRDGYLEHYYENAYAAALLDGCRVQRLIGLHALPL</sequence>
<evidence type="ECO:0000250" key="1"/>
<evidence type="ECO:0000305" key="2"/>
<name>RRG7_EREGS</name>
<gene>
    <name type="primary">RRG7</name>
    <name type="ordered locus">AFR541W</name>
</gene>